<evidence type="ECO:0000255" key="1">
    <source>
        <dbReference type="HAMAP-Rule" id="MF_00144"/>
    </source>
</evidence>
<name>MNMA_RHOBA</name>
<proteinExistence type="inferred from homology"/>
<protein>
    <recommendedName>
        <fullName evidence="1">tRNA-specific 2-thiouridylase MnmA</fullName>
        <ecNumber evidence="1">2.8.1.13</ecNumber>
    </recommendedName>
</protein>
<reference key="1">
    <citation type="journal article" date="2003" name="Proc. Natl. Acad. Sci. U.S.A.">
        <title>Complete genome sequence of the marine planctomycete Pirellula sp. strain 1.</title>
        <authorList>
            <person name="Gloeckner F.O."/>
            <person name="Kube M."/>
            <person name="Bauer M."/>
            <person name="Teeling H."/>
            <person name="Lombardot T."/>
            <person name="Ludwig W."/>
            <person name="Gade D."/>
            <person name="Beck A."/>
            <person name="Borzym K."/>
            <person name="Heitmann K."/>
            <person name="Rabus R."/>
            <person name="Schlesner H."/>
            <person name="Amann R."/>
            <person name="Reinhardt R."/>
        </authorList>
    </citation>
    <scope>NUCLEOTIDE SEQUENCE [LARGE SCALE GENOMIC DNA]</scope>
    <source>
        <strain>DSM 10527 / NCIMB 13988 / SH1</strain>
    </source>
</reference>
<accession>Q7TTZ4</accession>
<gene>
    <name evidence="1" type="primary">mnmA</name>
    <name type="synonym">trmU</name>
    <name type="ordered locus">RB6554</name>
</gene>
<organism>
    <name type="scientific">Rhodopirellula baltica (strain DSM 10527 / NCIMB 13988 / SH1)</name>
    <dbReference type="NCBI Taxonomy" id="243090"/>
    <lineage>
        <taxon>Bacteria</taxon>
        <taxon>Pseudomonadati</taxon>
        <taxon>Planctomycetota</taxon>
        <taxon>Planctomycetia</taxon>
        <taxon>Pirellulales</taxon>
        <taxon>Pirellulaceae</taxon>
        <taxon>Rhodopirellula</taxon>
    </lineage>
</organism>
<sequence>MSRVVLAMSGGVDSSVAAHLLLRDGHEVIGVFMRHGEASAAACRIDSDEPQNTNPLNLPVLGDSAGGKRADHKQGCCSATDAADARRVAMSMGIPFYSLDLQEDFRKIVDYFVDDYLAARTPNPCVKCNHWIKFGRLFDYADGVDAEFVATGHYARMVHSNGRSELHRGLDGHKDQSYALFGIDPARLSRMMLPVGDFTKPEIREMATSLGLGVSDKKDSQEICFVTQGHHSDFVKSRRPEMVGATAGEIVTTGGKVVGEHKGFEAFTIGQRKRLGVAMGEPHFVIRIEPDTRRVVIGRAEELLRPGLVADQCNWFVTREELADAQSVGIQIRYNGQPHPGHVVMDGSDPTRMKVMFDDPQAAVAPGQAAVVYDGERVLGGGWITHAIDHIADGSPPPA</sequence>
<feature type="chain" id="PRO_0000121668" description="tRNA-specific 2-thiouridylase MnmA">
    <location>
        <begin position="1"/>
        <end position="399"/>
    </location>
</feature>
<feature type="region of interest" description="Interaction with tRNA" evidence="1">
    <location>
        <begin position="174"/>
        <end position="176"/>
    </location>
</feature>
<feature type="region of interest" description="Interaction with tRNA" evidence="1">
    <location>
        <begin position="333"/>
        <end position="334"/>
    </location>
</feature>
<feature type="active site" description="Nucleophile" evidence="1">
    <location>
        <position position="128"/>
    </location>
</feature>
<feature type="active site" description="Cysteine persulfide intermediate" evidence="1">
    <location>
        <position position="224"/>
    </location>
</feature>
<feature type="binding site" evidence="1">
    <location>
        <begin position="7"/>
        <end position="14"/>
    </location>
    <ligand>
        <name>ATP</name>
        <dbReference type="ChEBI" id="CHEBI:30616"/>
    </ligand>
</feature>
<feature type="binding site" evidence="1">
    <location>
        <position position="33"/>
    </location>
    <ligand>
        <name>ATP</name>
        <dbReference type="ChEBI" id="CHEBI:30616"/>
    </ligand>
</feature>
<feature type="binding site" evidence="1">
    <location>
        <position position="152"/>
    </location>
    <ligand>
        <name>ATP</name>
        <dbReference type="ChEBI" id="CHEBI:30616"/>
    </ligand>
</feature>
<feature type="site" description="Interaction with tRNA" evidence="1">
    <location>
        <position position="153"/>
    </location>
</feature>
<feature type="site" description="Interaction with tRNA" evidence="1">
    <location>
        <position position="368"/>
    </location>
</feature>
<feature type="disulfide bond" description="Alternate" evidence="1">
    <location>
        <begin position="128"/>
        <end position="224"/>
    </location>
</feature>
<comment type="function">
    <text evidence="1">Catalyzes the 2-thiolation of uridine at the wobble position (U34) of tRNA, leading to the formation of s(2)U34.</text>
</comment>
<comment type="catalytic activity">
    <reaction evidence="1">
        <text>S-sulfanyl-L-cysteinyl-[protein] + uridine(34) in tRNA + AH2 + ATP = 2-thiouridine(34) in tRNA + L-cysteinyl-[protein] + A + AMP + diphosphate + H(+)</text>
        <dbReference type="Rhea" id="RHEA:47032"/>
        <dbReference type="Rhea" id="RHEA-COMP:10131"/>
        <dbReference type="Rhea" id="RHEA-COMP:11726"/>
        <dbReference type="Rhea" id="RHEA-COMP:11727"/>
        <dbReference type="Rhea" id="RHEA-COMP:11728"/>
        <dbReference type="ChEBI" id="CHEBI:13193"/>
        <dbReference type="ChEBI" id="CHEBI:15378"/>
        <dbReference type="ChEBI" id="CHEBI:17499"/>
        <dbReference type="ChEBI" id="CHEBI:29950"/>
        <dbReference type="ChEBI" id="CHEBI:30616"/>
        <dbReference type="ChEBI" id="CHEBI:33019"/>
        <dbReference type="ChEBI" id="CHEBI:61963"/>
        <dbReference type="ChEBI" id="CHEBI:65315"/>
        <dbReference type="ChEBI" id="CHEBI:87170"/>
        <dbReference type="ChEBI" id="CHEBI:456215"/>
        <dbReference type="EC" id="2.8.1.13"/>
    </reaction>
</comment>
<comment type="subcellular location">
    <subcellularLocation>
        <location evidence="1">Cytoplasm</location>
    </subcellularLocation>
</comment>
<comment type="similarity">
    <text evidence="1">Belongs to the MnmA/TRMU family.</text>
</comment>
<keyword id="KW-0067">ATP-binding</keyword>
<keyword id="KW-0963">Cytoplasm</keyword>
<keyword id="KW-1015">Disulfide bond</keyword>
<keyword id="KW-0547">Nucleotide-binding</keyword>
<keyword id="KW-1185">Reference proteome</keyword>
<keyword id="KW-0694">RNA-binding</keyword>
<keyword id="KW-0808">Transferase</keyword>
<keyword id="KW-0819">tRNA processing</keyword>
<keyword id="KW-0820">tRNA-binding</keyword>
<dbReference type="EC" id="2.8.1.13" evidence="1"/>
<dbReference type="EMBL" id="BX294144">
    <property type="protein sequence ID" value="CAD74876.1"/>
    <property type="molecule type" value="Genomic_DNA"/>
</dbReference>
<dbReference type="RefSeq" id="NP_867330.1">
    <property type="nucleotide sequence ID" value="NC_005027.1"/>
</dbReference>
<dbReference type="RefSeq" id="WP_011120981.1">
    <property type="nucleotide sequence ID" value="NC_005027.1"/>
</dbReference>
<dbReference type="SMR" id="Q7TTZ4"/>
<dbReference type="FunCoup" id="Q7TTZ4">
    <property type="interactions" value="532"/>
</dbReference>
<dbReference type="STRING" id="243090.RB6554"/>
<dbReference type="EnsemblBacteria" id="CAD74876">
    <property type="protein sequence ID" value="CAD74876"/>
    <property type="gene ID" value="RB6554"/>
</dbReference>
<dbReference type="KEGG" id="rba:RB6554"/>
<dbReference type="PATRIC" id="fig|243090.15.peg.3175"/>
<dbReference type="eggNOG" id="COG0482">
    <property type="taxonomic scope" value="Bacteria"/>
</dbReference>
<dbReference type="HOGENOM" id="CLU_035188_0_0_0"/>
<dbReference type="InParanoid" id="Q7TTZ4"/>
<dbReference type="OrthoDB" id="9800696at2"/>
<dbReference type="Proteomes" id="UP000001025">
    <property type="component" value="Chromosome"/>
</dbReference>
<dbReference type="GO" id="GO:0005737">
    <property type="term" value="C:cytoplasm"/>
    <property type="evidence" value="ECO:0007669"/>
    <property type="project" value="UniProtKB-SubCell"/>
</dbReference>
<dbReference type="GO" id="GO:0005524">
    <property type="term" value="F:ATP binding"/>
    <property type="evidence" value="ECO:0007669"/>
    <property type="project" value="UniProtKB-KW"/>
</dbReference>
<dbReference type="GO" id="GO:0000049">
    <property type="term" value="F:tRNA binding"/>
    <property type="evidence" value="ECO:0007669"/>
    <property type="project" value="UniProtKB-KW"/>
</dbReference>
<dbReference type="GO" id="GO:0103016">
    <property type="term" value="F:tRNA-uridine 2-sulfurtransferase activity"/>
    <property type="evidence" value="ECO:0007669"/>
    <property type="project" value="UniProtKB-EC"/>
</dbReference>
<dbReference type="GO" id="GO:0002143">
    <property type="term" value="P:tRNA wobble position uridine thiolation"/>
    <property type="evidence" value="ECO:0000318"/>
    <property type="project" value="GO_Central"/>
</dbReference>
<dbReference type="CDD" id="cd01998">
    <property type="entry name" value="MnmA_TRMU-like"/>
    <property type="match status" value="1"/>
</dbReference>
<dbReference type="FunFam" id="2.40.30.10:FF:000127">
    <property type="entry name" value="tRNA-specific 2-thiouridylase MnmA"/>
    <property type="match status" value="1"/>
</dbReference>
<dbReference type="FunFam" id="3.40.50.620:FF:000057">
    <property type="entry name" value="tRNA-specific 2-thiouridylase MnmA"/>
    <property type="match status" value="1"/>
</dbReference>
<dbReference type="Gene3D" id="2.30.30.280">
    <property type="entry name" value="Adenine nucleotide alpha hydrolases-like domains"/>
    <property type="match status" value="1"/>
</dbReference>
<dbReference type="Gene3D" id="3.40.50.620">
    <property type="entry name" value="HUPs"/>
    <property type="match status" value="1"/>
</dbReference>
<dbReference type="Gene3D" id="2.40.30.10">
    <property type="entry name" value="Translation factors"/>
    <property type="match status" value="1"/>
</dbReference>
<dbReference type="HAMAP" id="MF_00144">
    <property type="entry name" value="tRNA_thiouridyl_MnmA"/>
    <property type="match status" value="1"/>
</dbReference>
<dbReference type="InterPro" id="IPR004506">
    <property type="entry name" value="MnmA-like"/>
</dbReference>
<dbReference type="InterPro" id="IPR046885">
    <property type="entry name" value="MnmA-like_C"/>
</dbReference>
<dbReference type="InterPro" id="IPR046884">
    <property type="entry name" value="MnmA-like_central"/>
</dbReference>
<dbReference type="InterPro" id="IPR023382">
    <property type="entry name" value="MnmA-like_central_sf"/>
</dbReference>
<dbReference type="InterPro" id="IPR014729">
    <property type="entry name" value="Rossmann-like_a/b/a_fold"/>
</dbReference>
<dbReference type="NCBIfam" id="NF001138">
    <property type="entry name" value="PRK00143.1"/>
    <property type="match status" value="1"/>
</dbReference>
<dbReference type="NCBIfam" id="TIGR00420">
    <property type="entry name" value="trmU"/>
    <property type="match status" value="1"/>
</dbReference>
<dbReference type="PANTHER" id="PTHR11933:SF5">
    <property type="entry name" value="MITOCHONDRIAL TRNA-SPECIFIC 2-THIOURIDYLASE 1"/>
    <property type="match status" value="1"/>
</dbReference>
<dbReference type="PANTHER" id="PTHR11933">
    <property type="entry name" value="TRNA 5-METHYLAMINOMETHYL-2-THIOURIDYLATE -METHYLTRANSFERASE"/>
    <property type="match status" value="1"/>
</dbReference>
<dbReference type="Pfam" id="PF03054">
    <property type="entry name" value="tRNA_Me_trans"/>
    <property type="match status" value="1"/>
</dbReference>
<dbReference type="Pfam" id="PF20258">
    <property type="entry name" value="tRNA_Me_trans_C"/>
    <property type="match status" value="1"/>
</dbReference>
<dbReference type="Pfam" id="PF20259">
    <property type="entry name" value="tRNA_Me_trans_M"/>
    <property type="match status" value="1"/>
</dbReference>
<dbReference type="SUPFAM" id="SSF52402">
    <property type="entry name" value="Adenine nucleotide alpha hydrolases-like"/>
    <property type="match status" value="1"/>
</dbReference>